<evidence type="ECO:0000255" key="1">
    <source>
        <dbReference type="HAMAP-Rule" id="MF_00255"/>
    </source>
</evidence>
<reference key="1">
    <citation type="journal article" date="2006" name="Proc. Natl. Acad. Sci. U.S.A.">
        <title>The complete genome sequence of a chronic atrophic gastritis Helicobacter pylori strain: evolution during disease progression.</title>
        <authorList>
            <person name="Oh J.D."/>
            <person name="Kling-Baeckhed H."/>
            <person name="Giannakis M."/>
            <person name="Xu J."/>
            <person name="Fulton R.S."/>
            <person name="Fulton L.A."/>
            <person name="Cordum H.S."/>
            <person name="Wang C."/>
            <person name="Elliott G."/>
            <person name="Edwards J."/>
            <person name="Mardis E.R."/>
            <person name="Engstrand L.G."/>
            <person name="Gordon J.I."/>
        </authorList>
    </citation>
    <scope>NUCLEOTIDE SEQUENCE [LARGE SCALE GENOMIC DNA]</scope>
    <source>
        <strain>HPAG1</strain>
    </source>
</reference>
<dbReference type="EC" id="6.1.1.14" evidence="1"/>
<dbReference type="EMBL" id="CP000241">
    <property type="protein sequence ID" value="ABF85020.1"/>
    <property type="molecule type" value="Genomic_DNA"/>
</dbReference>
<dbReference type="RefSeq" id="WP_000555246.1">
    <property type="nucleotide sequence ID" value="NC_008086.1"/>
</dbReference>
<dbReference type="SMR" id="Q1CSQ2"/>
<dbReference type="KEGG" id="hpa:HPAG1_0953"/>
<dbReference type="HOGENOM" id="CLU_007220_2_2_7"/>
<dbReference type="GO" id="GO:0005829">
    <property type="term" value="C:cytosol"/>
    <property type="evidence" value="ECO:0007669"/>
    <property type="project" value="TreeGrafter"/>
</dbReference>
<dbReference type="GO" id="GO:0005524">
    <property type="term" value="F:ATP binding"/>
    <property type="evidence" value="ECO:0007669"/>
    <property type="project" value="UniProtKB-UniRule"/>
</dbReference>
<dbReference type="GO" id="GO:0004820">
    <property type="term" value="F:glycine-tRNA ligase activity"/>
    <property type="evidence" value="ECO:0007669"/>
    <property type="project" value="UniProtKB-UniRule"/>
</dbReference>
<dbReference type="GO" id="GO:0006426">
    <property type="term" value="P:glycyl-tRNA aminoacylation"/>
    <property type="evidence" value="ECO:0007669"/>
    <property type="project" value="UniProtKB-UniRule"/>
</dbReference>
<dbReference type="HAMAP" id="MF_00255">
    <property type="entry name" value="Gly_tRNA_synth_beta"/>
    <property type="match status" value="1"/>
</dbReference>
<dbReference type="InterPro" id="IPR015944">
    <property type="entry name" value="Gly-tRNA-synth_bsu"/>
</dbReference>
<dbReference type="InterPro" id="IPR006194">
    <property type="entry name" value="Gly-tRNA-synth_heterodimer"/>
</dbReference>
<dbReference type="NCBIfam" id="TIGR00211">
    <property type="entry name" value="glyS"/>
    <property type="match status" value="1"/>
</dbReference>
<dbReference type="PANTHER" id="PTHR30075:SF2">
    <property type="entry name" value="GLYCINE--TRNA LIGASE, CHLOROPLASTIC_MITOCHONDRIAL 2"/>
    <property type="match status" value="1"/>
</dbReference>
<dbReference type="PANTHER" id="PTHR30075">
    <property type="entry name" value="GLYCYL-TRNA SYNTHETASE"/>
    <property type="match status" value="1"/>
</dbReference>
<dbReference type="Pfam" id="PF02092">
    <property type="entry name" value="tRNA_synt_2f"/>
    <property type="match status" value="1"/>
</dbReference>
<dbReference type="PRINTS" id="PR01045">
    <property type="entry name" value="TRNASYNTHGB"/>
</dbReference>
<dbReference type="PROSITE" id="PS50861">
    <property type="entry name" value="AA_TRNA_LIGASE_II_GLYAB"/>
    <property type="match status" value="1"/>
</dbReference>
<accession>Q1CSQ2</accession>
<organism>
    <name type="scientific">Helicobacter pylori (strain HPAG1)</name>
    <dbReference type="NCBI Taxonomy" id="357544"/>
    <lineage>
        <taxon>Bacteria</taxon>
        <taxon>Pseudomonadati</taxon>
        <taxon>Campylobacterota</taxon>
        <taxon>Epsilonproteobacteria</taxon>
        <taxon>Campylobacterales</taxon>
        <taxon>Helicobacteraceae</taxon>
        <taxon>Helicobacter</taxon>
    </lineage>
</organism>
<feature type="chain" id="PRO_1000006368" description="Glycine--tRNA ligase beta subunit">
    <location>
        <begin position="1"/>
        <end position="701"/>
    </location>
</feature>
<gene>
    <name evidence="1" type="primary">glyS</name>
    <name type="ordered locus">HPAG1_0953</name>
</gene>
<comment type="catalytic activity">
    <reaction evidence="1">
        <text>tRNA(Gly) + glycine + ATP = glycyl-tRNA(Gly) + AMP + diphosphate</text>
        <dbReference type="Rhea" id="RHEA:16013"/>
        <dbReference type="Rhea" id="RHEA-COMP:9664"/>
        <dbReference type="Rhea" id="RHEA-COMP:9683"/>
        <dbReference type="ChEBI" id="CHEBI:30616"/>
        <dbReference type="ChEBI" id="CHEBI:33019"/>
        <dbReference type="ChEBI" id="CHEBI:57305"/>
        <dbReference type="ChEBI" id="CHEBI:78442"/>
        <dbReference type="ChEBI" id="CHEBI:78522"/>
        <dbReference type="ChEBI" id="CHEBI:456215"/>
        <dbReference type="EC" id="6.1.1.14"/>
    </reaction>
</comment>
<comment type="subunit">
    <text evidence="1">Tetramer of two alpha and two beta subunits.</text>
</comment>
<comment type="subcellular location">
    <subcellularLocation>
        <location evidence="1">Cytoplasm</location>
    </subcellularLocation>
</comment>
<comment type="similarity">
    <text evidence="1">Belongs to the class-II aminoacyl-tRNA synthetase family.</text>
</comment>
<proteinExistence type="inferred from homology"/>
<name>SYGB_HELPH</name>
<protein>
    <recommendedName>
        <fullName evidence="1">Glycine--tRNA ligase beta subunit</fullName>
        <ecNumber evidence="1">6.1.1.14</ecNumber>
    </recommendedName>
    <alternativeName>
        <fullName evidence="1">Glycyl-tRNA synthetase beta subunit</fullName>
        <shortName evidence="1">GlyRS</shortName>
    </alternativeName>
</protein>
<sequence length="701" mass="80365">MHSDELLVEILVEELPAQALLNEYKEMPKKLHALLNKRALEAGNIEIFYTPRRLCLLIKDFPLLTQETKEEFFGPPIKIAFNNEDKTQGLNALGLGFYQKLGLKDHQHFQTAFKNNKEVLYHAKIHEKEPTKDLIMPIVLEFLEGLNFGKSMRWGNVEKSFIRPIHNICVLFNGENFNGIEVKEYGFKTKQATKVHRQEGFDFIEVDSPKAYFEVLEKNHVILDPKKREAKILQEIKELETKHDIIVEIDRDLLDEVVAITEYPSALLGEFDKAFLKLPNEIITTSMKENQRYFAVFDQKSQEESPTLHNGFIVVSNAINKDKQKIIAGNQKVLKARLSDAVFFYENDLKKPLDNTPLESVVFVQGLGTLKDKMEREAIIAQYLTQKYAPSLNMPLEKALELIGRAVKIAKADLLSEVVYEFSELQGIMGYYYALKQNENELVALSVKEQYLPASENAPLPSSVFSAIVALSLKLDSLFSLFSAGKIPSGSKDPFALRRLSFGLLKIVAHYGLEFDLKADLKNLFEKVGVYQSFDLEILEKFLLERFHNLIDCNPSIIRSVLNTNERDIVKIIQKVKALKRFLDDPKNAQKKELLFSAFKRLANINKDRNPNESSEFSISLFKELQEHALFEAFNAIQTSAFEGLDSKIEAYFGLHAPLEEYFKSVLVMDKDIEIQKNRKNFLWGVYQSFLEIGDIKEIAI</sequence>
<keyword id="KW-0030">Aminoacyl-tRNA synthetase</keyword>
<keyword id="KW-0067">ATP-binding</keyword>
<keyword id="KW-0963">Cytoplasm</keyword>
<keyword id="KW-0436">Ligase</keyword>
<keyword id="KW-0547">Nucleotide-binding</keyword>
<keyword id="KW-0648">Protein biosynthesis</keyword>